<accession>Q92HV6</accession>
<reference key="1">
    <citation type="journal article" date="2001" name="Science">
        <title>Mechanisms of evolution in Rickettsia conorii and R. prowazekii.</title>
        <authorList>
            <person name="Ogata H."/>
            <person name="Audic S."/>
            <person name="Renesto-Audiffren P."/>
            <person name="Fournier P.-E."/>
            <person name="Barbe V."/>
            <person name="Samson D."/>
            <person name="Roux V."/>
            <person name="Cossart P."/>
            <person name="Weissenbach J."/>
            <person name="Claverie J.-M."/>
            <person name="Raoult D."/>
        </authorList>
    </citation>
    <scope>NUCLEOTIDE SEQUENCE [LARGE SCALE GENOMIC DNA]</scope>
    <source>
        <strain>ATCC VR-613 / Malish 7</strain>
    </source>
</reference>
<organism>
    <name type="scientific">Rickettsia conorii (strain ATCC VR-613 / Malish 7)</name>
    <dbReference type="NCBI Taxonomy" id="272944"/>
    <lineage>
        <taxon>Bacteria</taxon>
        <taxon>Pseudomonadati</taxon>
        <taxon>Pseudomonadota</taxon>
        <taxon>Alphaproteobacteria</taxon>
        <taxon>Rickettsiales</taxon>
        <taxon>Rickettsiaceae</taxon>
        <taxon>Rickettsieae</taxon>
        <taxon>Rickettsia</taxon>
        <taxon>spotted fever group</taxon>
    </lineage>
</organism>
<proteinExistence type="inferred from homology"/>
<gene>
    <name evidence="1" type="primary">rpsO</name>
    <name type="ordered locus">RC0664</name>
</gene>
<evidence type="ECO:0000255" key="1">
    <source>
        <dbReference type="HAMAP-Rule" id="MF_01343"/>
    </source>
</evidence>
<evidence type="ECO:0000305" key="2"/>
<comment type="function">
    <text evidence="1">One of the primary rRNA binding proteins, it binds directly to 16S rRNA where it helps nucleate assembly of the platform of the 30S subunit by binding and bridging several RNA helices of the 16S rRNA.</text>
</comment>
<comment type="function">
    <text evidence="1">Forms an intersubunit bridge (bridge B4) with the 23S rRNA of the 50S subunit in the ribosome.</text>
</comment>
<comment type="subunit">
    <text evidence="1">Part of the 30S ribosomal subunit. Forms a bridge to the 50S subunit in the 70S ribosome, contacting the 23S rRNA.</text>
</comment>
<comment type="similarity">
    <text evidence="1">Belongs to the universal ribosomal protein uS15 family.</text>
</comment>
<feature type="chain" id="PRO_0000115525" description="Small ribosomal subunit protein uS15">
    <location>
        <begin position="1"/>
        <end position="91"/>
    </location>
</feature>
<name>RS15_RICCN</name>
<sequence length="91" mass="10594">MSITTERKQQLIKEYAITENDTGSSAVQCAILTERINNLTEHFKSNHKDHTSRRGLLILVGRRRRLLNYIKKNNVSKYLDLISKLGIRKIK</sequence>
<protein>
    <recommendedName>
        <fullName evidence="1">Small ribosomal subunit protein uS15</fullName>
    </recommendedName>
    <alternativeName>
        <fullName evidence="2">30S ribosomal protein S15</fullName>
    </alternativeName>
</protein>
<dbReference type="EMBL" id="AE006914">
    <property type="protein sequence ID" value="AAL03202.1"/>
    <property type="molecule type" value="Genomic_DNA"/>
</dbReference>
<dbReference type="PIR" id="H97782">
    <property type="entry name" value="H97782"/>
</dbReference>
<dbReference type="RefSeq" id="WP_004995678.1">
    <property type="nucleotide sequence ID" value="NC_003103.1"/>
</dbReference>
<dbReference type="SMR" id="Q92HV6"/>
<dbReference type="GeneID" id="95362261"/>
<dbReference type="KEGG" id="rco:RC0664"/>
<dbReference type="HOGENOM" id="CLU_148518_0_0_5"/>
<dbReference type="Proteomes" id="UP000000816">
    <property type="component" value="Chromosome"/>
</dbReference>
<dbReference type="GO" id="GO:0022627">
    <property type="term" value="C:cytosolic small ribosomal subunit"/>
    <property type="evidence" value="ECO:0007669"/>
    <property type="project" value="TreeGrafter"/>
</dbReference>
<dbReference type="GO" id="GO:0019843">
    <property type="term" value="F:rRNA binding"/>
    <property type="evidence" value="ECO:0007669"/>
    <property type="project" value="UniProtKB-UniRule"/>
</dbReference>
<dbReference type="GO" id="GO:0003735">
    <property type="term" value="F:structural constituent of ribosome"/>
    <property type="evidence" value="ECO:0007669"/>
    <property type="project" value="InterPro"/>
</dbReference>
<dbReference type="GO" id="GO:0006412">
    <property type="term" value="P:translation"/>
    <property type="evidence" value="ECO:0007669"/>
    <property type="project" value="UniProtKB-UniRule"/>
</dbReference>
<dbReference type="CDD" id="cd00353">
    <property type="entry name" value="Ribosomal_S15p_S13e"/>
    <property type="match status" value="1"/>
</dbReference>
<dbReference type="FunFam" id="1.10.287.10:FF:000002">
    <property type="entry name" value="30S ribosomal protein S15"/>
    <property type="match status" value="1"/>
</dbReference>
<dbReference type="Gene3D" id="6.10.250.3130">
    <property type="match status" value="1"/>
</dbReference>
<dbReference type="Gene3D" id="1.10.287.10">
    <property type="entry name" value="S15/NS1, RNA-binding"/>
    <property type="match status" value="1"/>
</dbReference>
<dbReference type="HAMAP" id="MF_01343_B">
    <property type="entry name" value="Ribosomal_uS15_B"/>
    <property type="match status" value="1"/>
</dbReference>
<dbReference type="InterPro" id="IPR000589">
    <property type="entry name" value="Ribosomal_uS15"/>
</dbReference>
<dbReference type="InterPro" id="IPR005290">
    <property type="entry name" value="Ribosomal_uS15_bac-type"/>
</dbReference>
<dbReference type="InterPro" id="IPR009068">
    <property type="entry name" value="uS15_NS1_RNA-bd_sf"/>
</dbReference>
<dbReference type="NCBIfam" id="TIGR00952">
    <property type="entry name" value="S15_bact"/>
    <property type="match status" value="1"/>
</dbReference>
<dbReference type="PANTHER" id="PTHR23321">
    <property type="entry name" value="RIBOSOMAL PROTEIN S15, BACTERIAL AND ORGANELLAR"/>
    <property type="match status" value="1"/>
</dbReference>
<dbReference type="PANTHER" id="PTHR23321:SF26">
    <property type="entry name" value="SMALL RIBOSOMAL SUBUNIT PROTEIN US15M"/>
    <property type="match status" value="1"/>
</dbReference>
<dbReference type="Pfam" id="PF00312">
    <property type="entry name" value="Ribosomal_S15"/>
    <property type="match status" value="1"/>
</dbReference>
<dbReference type="SMART" id="SM01387">
    <property type="entry name" value="Ribosomal_S15"/>
    <property type="match status" value="1"/>
</dbReference>
<dbReference type="SUPFAM" id="SSF47060">
    <property type="entry name" value="S15/NS1 RNA-binding domain"/>
    <property type="match status" value="1"/>
</dbReference>
<dbReference type="PROSITE" id="PS00362">
    <property type="entry name" value="RIBOSOMAL_S15"/>
    <property type="match status" value="1"/>
</dbReference>
<keyword id="KW-0687">Ribonucleoprotein</keyword>
<keyword id="KW-0689">Ribosomal protein</keyword>
<keyword id="KW-0694">RNA-binding</keyword>
<keyword id="KW-0699">rRNA-binding</keyword>